<keyword id="KW-1185">Reference proteome</keyword>
<protein>
    <recommendedName>
        <fullName>Uncharacterized protein YfmG</fullName>
    </recommendedName>
</protein>
<proteinExistence type="predicted"/>
<sequence>MTLLMQDHKSIYNKDIEILIEVEELITSVPENKKNDFKSLIDNRIMTLLNKIQHPVAAENVFGMCIAYPNTYIRYRLIDFVEKWVPYFSAVETIINLTQDPDDLVSFKAMDVCANHKIEESVAYLSSIIDDVRESISYPKKPVGLGAQKVLSTLLDIFGVEKHEELVMLKNYFDQNGILPNNFDFEEKIPQSLIEEFEKTEEDGMILIPGGFFEFGLNENEIPDKTFNWKDAVPRQKVWLPPFFIDKYPVTNKDYDIFTEFIEENGHIFCHPNEPQNKQHRRNTYWDDRYLDNHPVTGIDFYDAFAYARYKGKELPTEFQWEKAARGEKGNVWPWGDKFDPAKVQYAGSLYNEPITSLKSWRENLLKAHADKELNHLTSDIFEQNGESPYGVCGMIGGTWEWTRSELKTKRAFHPIFENVPFNSVNSFAVLKGGSFFSHPGLMFPSFRAKDIPFCRHNEMGIRCVKNIPVYKIRESINGPITNKAIY</sequence>
<accession>O34722</accession>
<accession>Q79ES9</accession>
<name>YFMG_BACSU</name>
<reference key="1">
    <citation type="journal article" date="1997" name="Gene">
        <title>Cloning and sequencing of a 35.7 kb in the 70 degree-73 degree region of the Bacillus subtilis genome reveal genes for a new two-component system, three spore germination proteins, an iron uptake system and a general stress response protein.</title>
        <authorList>
            <person name="Yamamoto H."/>
            <person name="Uchiyama S."/>
            <person name="Nugroho F.A."/>
            <person name="Sekiguchi J."/>
        </authorList>
    </citation>
    <scope>NUCLEOTIDE SEQUENCE [GENOMIC DNA]</scope>
    <source>
        <strain>168 / AC327</strain>
    </source>
</reference>
<reference key="2">
    <citation type="journal article" date="1997" name="Nature">
        <title>The complete genome sequence of the Gram-positive bacterium Bacillus subtilis.</title>
        <authorList>
            <person name="Kunst F."/>
            <person name="Ogasawara N."/>
            <person name="Moszer I."/>
            <person name="Albertini A.M."/>
            <person name="Alloni G."/>
            <person name="Azevedo V."/>
            <person name="Bertero M.G."/>
            <person name="Bessieres P."/>
            <person name="Bolotin A."/>
            <person name="Borchert S."/>
            <person name="Borriss R."/>
            <person name="Boursier L."/>
            <person name="Brans A."/>
            <person name="Braun M."/>
            <person name="Brignell S.C."/>
            <person name="Bron S."/>
            <person name="Brouillet S."/>
            <person name="Bruschi C.V."/>
            <person name="Caldwell B."/>
            <person name="Capuano V."/>
            <person name="Carter N.M."/>
            <person name="Choi S.-K."/>
            <person name="Codani J.-J."/>
            <person name="Connerton I.F."/>
            <person name="Cummings N.J."/>
            <person name="Daniel R.A."/>
            <person name="Denizot F."/>
            <person name="Devine K.M."/>
            <person name="Duesterhoeft A."/>
            <person name="Ehrlich S.D."/>
            <person name="Emmerson P.T."/>
            <person name="Entian K.-D."/>
            <person name="Errington J."/>
            <person name="Fabret C."/>
            <person name="Ferrari E."/>
            <person name="Foulger D."/>
            <person name="Fritz C."/>
            <person name="Fujita M."/>
            <person name="Fujita Y."/>
            <person name="Fuma S."/>
            <person name="Galizzi A."/>
            <person name="Galleron N."/>
            <person name="Ghim S.-Y."/>
            <person name="Glaser P."/>
            <person name="Goffeau A."/>
            <person name="Golightly E.J."/>
            <person name="Grandi G."/>
            <person name="Guiseppi G."/>
            <person name="Guy B.J."/>
            <person name="Haga K."/>
            <person name="Haiech J."/>
            <person name="Harwood C.R."/>
            <person name="Henaut A."/>
            <person name="Hilbert H."/>
            <person name="Holsappel S."/>
            <person name="Hosono S."/>
            <person name="Hullo M.-F."/>
            <person name="Itaya M."/>
            <person name="Jones L.-M."/>
            <person name="Joris B."/>
            <person name="Karamata D."/>
            <person name="Kasahara Y."/>
            <person name="Klaerr-Blanchard M."/>
            <person name="Klein C."/>
            <person name="Kobayashi Y."/>
            <person name="Koetter P."/>
            <person name="Koningstein G."/>
            <person name="Krogh S."/>
            <person name="Kumano M."/>
            <person name="Kurita K."/>
            <person name="Lapidus A."/>
            <person name="Lardinois S."/>
            <person name="Lauber J."/>
            <person name="Lazarevic V."/>
            <person name="Lee S.-M."/>
            <person name="Levine A."/>
            <person name="Liu H."/>
            <person name="Masuda S."/>
            <person name="Mauel C."/>
            <person name="Medigue C."/>
            <person name="Medina N."/>
            <person name="Mellado R.P."/>
            <person name="Mizuno M."/>
            <person name="Moestl D."/>
            <person name="Nakai S."/>
            <person name="Noback M."/>
            <person name="Noone D."/>
            <person name="O'Reilly M."/>
            <person name="Ogawa K."/>
            <person name="Ogiwara A."/>
            <person name="Oudega B."/>
            <person name="Park S.-H."/>
            <person name="Parro V."/>
            <person name="Pohl T.M."/>
            <person name="Portetelle D."/>
            <person name="Porwollik S."/>
            <person name="Prescott A.M."/>
            <person name="Presecan E."/>
            <person name="Pujic P."/>
            <person name="Purnelle B."/>
            <person name="Rapoport G."/>
            <person name="Rey M."/>
            <person name="Reynolds S."/>
            <person name="Rieger M."/>
            <person name="Rivolta C."/>
            <person name="Rocha E."/>
            <person name="Roche B."/>
            <person name="Rose M."/>
            <person name="Sadaie Y."/>
            <person name="Sato T."/>
            <person name="Scanlan E."/>
            <person name="Schleich S."/>
            <person name="Schroeter R."/>
            <person name="Scoffone F."/>
            <person name="Sekiguchi J."/>
            <person name="Sekowska A."/>
            <person name="Seror S.J."/>
            <person name="Serror P."/>
            <person name="Shin B.-S."/>
            <person name="Soldo B."/>
            <person name="Sorokin A."/>
            <person name="Tacconi E."/>
            <person name="Takagi T."/>
            <person name="Takahashi H."/>
            <person name="Takemaru K."/>
            <person name="Takeuchi M."/>
            <person name="Tamakoshi A."/>
            <person name="Tanaka T."/>
            <person name="Terpstra P."/>
            <person name="Tognoni A."/>
            <person name="Tosato V."/>
            <person name="Uchiyama S."/>
            <person name="Vandenbol M."/>
            <person name="Vannier F."/>
            <person name="Vassarotti A."/>
            <person name="Viari A."/>
            <person name="Wambutt R."/>
            <person name="Wedler E."/>
            <person name="Wedler H."/>
            <person name="Weitzenegger T."/>
            <person name="Winters P."/>
            <person name="Wipat A."/>
            <person name="Yamamoto H."/>
            <person name="Yamane K."/>
            <person name="Yasumoto K."/>
            <person name="Yata K."/>
            <person name="Yoshida K."/>
            <person name="Yoshikawa H.-F."/>
            <person name="Zumstein E."/>
            <person name="Yoshikawa H."/>
            <person name="Danchin A."/>
        </authorList>
    </citation>
    <scope>NUCLEOTIDE SEQUENCE [LARGE SCALE GENOMIC DNA]</scope>
    <source>
        <strain>168</strain>
    </source>
</reference>
<dbReference type="EMBL" id="D86417">
    <property type="protein sequence ID" value="BAA22321.1"/>
    <property type="molecule type" value="Genomic_DNA"/>
</dbReference>
<dbReference type="EMBL" id="AL009126">
    <property type="protein sequence ID" value="CAB12577.1"/>
    <property type="molecule type" value="Genomic_DNA"/>
</dbReference>
<dbReference type="PIR" id="F69812">
    <property type="entry name" value="F69812"/>
</dbReference>
<dbReference type="RefSeq" id="NP_388629.1">
    <property type="nucleotide sequence ID" value="NC_000964.3"/>
</dbReference>
<dbReference type="RefSeq" id="WP_003244287.1">
    <property type="nucleotide sequence ID" value="NZ_OZ025638.1"/>
</dbReference>
<dbReference type="FunCoup" id="O34722">
    <property type="interactions" value="88"/>
</dbReference>
<dbReference type="STRING" id="224308.BSU07480"/>
<dbReference type="PaxDb" id="224308-BSU07480"/>
<dbReference type="EnsemblBacteria" id="CAB12577">
    <property type="protein sequence ID" value="CAB12577"/>
    <property type="gene ID" value="BSU_07480"/>
</dbReference>
<dbReference type="GeneID" id="938798"/>
<dbReference type="KEGG" id="bsu:BSU07480"/>
<dbReference type="PATRIC" id="fig|224308.179.peg.812"/>
<dbReference type="eggNOG" id="COG1262">
    <property type="taxonomic scope" value="Bacteria"/>
</dbReference>
<dbReference type="InParanoid" id="O34722"/>
<dbReference type="OrthoDB" id="9768004at2"/>
<dbReference type="PhylomeDB" id="O34722"/>
<dbReference type="BioCyc" id="BSUB:BSU07480-MONOMER"/>
<dbReference type="Proteomes" id="UP000001570">
    <property type="component" value="Chromosome"/>
</dbReference>
<dbReference type="GO" id="GO:0120147">
    <property type="term" value="F:formylglycine-generating oxidase activity"/>
    <property type="evidence" value="ECO:0000318"/>
    <property type="project" value="GO_Central"/>
</dbReference>
<dbReference type="Gene3D" id="3.90.1580.10">
    <property type="entry name" value="paralog of FGE (formylglycine-generating enzyme)"/>
    <property type="match status" value="1"/>
</dbReference>
<dbReference type="InterPro" id="IPR016187">
    <property type="entry name" value="CTDL_fold"/>
</dbReference>
<dbReference type="InterPro" id="IPR051043">
    <property type="entry name" value="Sulfatase_Mod_Factor_Kinase"/>
</dbReference>
<dbReference type="InterPro" id="IPR005532">
    <property type="entry name" value="SUMF_dom"/>
</dbReference>
<dbReference type="InterPro" id="IPR042095">
    <property type="entry name" value="SUMF_sf"/>
</dbReference>
<dbReference type="PANTHER" id="PTHR23150:SF19">
    <property type="entry name" value="FORMYLGLYCINE-GENERATING ENZYME"/>
    <property type="match status" value="1"/>
</dbReference>
<dbReference type="PANTHER" id="PTHR23150">
    <property type="entry name" value="SULFATASE MODIFYING FACTOR 1, 2"/>
    <property type="match status" value="1"/>
</dbReference>
<dbReference type="Pfam" id="PF03781">
    <property type="entry name" value="FGE-sulfatase"/>
    <property type="match status" value="1"/>
</dbReference>
<dbReference type="SUPFAM" id="SSF56436">
    <property type="entry name" value="C-type lectin-like"/>
    <property type="match status" value="1"/>
</dbReference>
<feature type="chain" id="PRO_0000389003" description="Uncharacterized protein YfmG">
    <location>
        <begin position="1"/>
        <end position="487"/>
    </location>
</feature>
<organism>
    <name type="scientific">Bacillus subtilis (strain 168)</name>
    <dbReference type="NCBI Taxonomy" id="224308"/>
    <lineage>
        <taxon>Bacteria</taxon>
        <taxon>Bacillati</taxon>
        <taxon>Bacillota</taxon>
        <taxon>Bacilli</taxon>
        <taxon>Bacillales</taxon>
        <taxon>Bacillaceae</taxon>
        <taxon>Bacillus</taxon>
    </lineage>
</organism>
<gene>
    <name type="primary">yfmG</name>
    <name type="ordered locus">BSU07480</name>
</gene>